<accession>A8Z148</accession>
<keyword id="KW-0050">Antiport</keyword>
<keyword id="KW-1003">Cell membrane</keyword>
<keyword id="KW-0406">Ion transport</keyword>
<keyword id="KW-0472">Membrane</keyword>
<keyword id="KW-0812">Transmembrane</keyword>
<keyword id="KW-1133">Transmembrane helix</keyword>
<keyword id="KW-0813">Transport</keyword>
<proteinExistence type="inferred from homology"/>
<sequence length="160" mass="18851">MNQIVLNIIIAFLWVLFQDEDHFKFSTFFSGYLIGLIVIYILHRFFSDDFYVRKIWVAIKFLGVYLYQLITSSISTINYILFKTKDMNPGLLSYETRLTSDWSITFLTILIIITPGSTVIRISQDSKKFFIHSIDVSEKEKDSLLRSIKHYEDLILEVSR</sequence>
<organism>
    <name type="scientific">Staphylococcus aureus (strain USA300 / TCH1516)</name>
    <dbReference type="NCBI Taxonomy" id="451516"/>
    <lineage>
        <taxon>Bacteria</taxon>
        <taxon>Bacillati</taxon>
        <taxon>Bacillota</taxon>
        <taxon>Bacilli</taxon>
        <taxon>Bacillales</taxon>
        <taxon>Staphylococcaceae</taxon>
        <taxon>Staphylococcus</taxon>
    </lineage>
</organism>
<protein>
    <recommendedName>
        <fullName>Putative antiporter subunit mnhE2</fullName>
    </recommendedName>
    <alternativeName>
        <fullName>Mrp complex subunit E2</fullName>
    </alternativeName>
    <alternativeName>
        <fullName>Putative NADH-ubiquinone oxidoreductase subunit mnhE2</fullName>
    </alternativeName>
</protein>
<feature type="chain" id="PRO_0000372222" description="Putative antiporter subunit mnhE2">
    <location>
        <begin position="1"/>
        <end position="160"/>
    </location>
</feature>
<feature type="transmembrane region" description="Helical" evidence="2">
    <location>
        <begin position="22"/>
        <end position="42"/>
    </location>
</feature>
<feature type="transmembrane region" description="Helical" evidence="2">
    <location>
        <begin position="55"/>
        <end position="75"/>
    </location>
</feature>
<feature type="transmembrane region" description="Helical" evidence="2">
    <location>
        <begin position="100"/>
        <end position="120"/>
    </location>
</feature>
<reference key="1">
    <citation type="journal article" date="2007" name="BMC Microbiol.">
        <title>Subtle genetic changes enhance virulence of methicillin resistant and sensitive Staphylococcus aureus.</title>
        <authorList>
            <person name="Highlander S.K."/>
            <person name="Hulten K.G."/>
            <person name="Qin X."/>
            <person name="Jiang H."/>
            <person name="Yerrapragada S."/>
            <person name="Mason E.O. Jr."/>
            <person name="Shang Y."/>
            <person name="Williams T.M."/>
            <person name="Fortunov R.M."/>
            <person name="Liu Y."/>
            <person name="Igboeli O."/>
            <person name="Petrosino J."/>
            <person name="Tirumalai M."/>
            <person name="Uzman A."/>
            <person name="Fox G.E."/>
            <person name="Cardenas A.M."/>
            <person name="Muzny D.M."/>
            <person name="Hemphill L."/>
            <person name="Ding Y."/>
            <person name="Dugan S."/>
            <person name="Blyth P.R."/>
            <person name="Buhay C.J."/>
            <person name="Dinh H.H."/>
            <person name="Hawes A.C."/>
            <person name="Holder M."/>
            <person name="Kovar C.L."/>
            <person name="Lee S.L."/>
            <person name="Liu W."/>
            <person name="Nazareth L.V."/>
            <person name="Wang Q."/>
            <person name="Zhou J."/>
            <person name="Kaplan S.L."/>
            <person name="Weinstock G.M."/>
        </authorList>
    </citation>
    <scope>NUCLEOTIDE SEQUENCE [LARGE SCALE GENOMIC DNA]</scope>
    <source>
        <strain>USA300 / TCH1516</strain>
    </source>
</reference>
<evidence type="ECO:0000250" key="1"/>
<evidence type="ECO:0000255" key="2"/>
<evidence type="ECO:0000305" key="3"/>
<dbReference type="EMBL" id="CP000730">
    <property type="protein sequence ID" value="ABX28669.1"/>
    <property type="molecule type" value="Genomic_DNA"/>
</dbReference>
<dbReference type="RefSeq" id="WP_001071973.1">
    <property type="nucleotide sequence ID" value="NC_010079.1"/>
</dbReference>
<dbReference type="SMR" id="A8Z148"/>
<dbReference type="KEGG" id="sax:USA300HOU_0647"/>
<dbReference type="HOGENOM" id="CLU_086615_3_2_9"/>
<dbReference type="GO" id="GO:0005886">
    <property type="term" value="C:plasma membrane"/>
    <property type="evidence" value="ECO:0007669"/>
    <property type="project" value="UniProtKB-SubCell"/>
</dbReference>
<dbReference type="GO" id="GO:0015297">
    <property type="term" value="F:antiporter activity"/>
    <property type="evidence" value="ECO:0007669"/>
    <property type="project" value="UniProtKB-KW"/>
</dbReference>
<dbReference type="GO" id="GO:0008324">
    <property type="term" value="F:monoatomic cation transmembrane transporter activity"/>
    <property type="evidence" value="ECO:0007669"/>
    <property type="project" value="InterPro"/>
</dbReference>
<dbReference type="InterPro" id="IPR002758">
    <property type="entry name" value="Cation_antiport_E"/>
</dbReference>
<dbReference type="NCBIfam" id="NF006517">
    <property type="entry name" value="PRK08965.1-1"/>
    <property type="match status" value="1"/>
</dbReference>
<dbReference type="PANTHER" id="PTHR34584">
    <property type="entry name" value="NA(+)/H(+) ANTIPORTER SUBUNIT E1"/>
    <property type="match status" value="1"/>
</dbReference>
<dbReference type="PANTHER" id="PTHR34584:SF1">
    <property type="entry name" value="NA(+)_H(+) ANTIPORTER SUBUNIT E1"/>
    <property type="match status" value="1"/>
</dbReference>
<dbReference type="Pfam" id="PF01899">
    <property type="entry name" value="MNHE"/>
    <property type="match status" value="1"/>
</dbReference>
<dbReference type="PIRSF" id="PIRSF019239">
    <property type="entry name" value="MrpE"/>
    <property type="match status" value="1"/>
</dbReference>
<comment type="subunit">
    <text evidence="1">May form a heterooligomeric complex that consists of seven subunits: mnhA2, mnhB2, mnhC2, mnhD2, mnhE2, mnhF2 and mnhG2.</text>
</comment>
<comment type="subcellular location">
    <subcellularLocation>
        <location evidence="3">Cell membrane</location>
        <topology evidence="3">Multi-pass membrane protein</topology>
    </subcellularLocation>
</comment>
<comment type="similarity">
    <text evidence="3">Belongs to the CPA3 antiporters (TC 2.A.63) subunit E family.</text>
</comment>
<gene>
    <name type="primary">mnhE2</name>
    <name type="synonym">mrpE2</name>
    <name type="ordered locus">USA300HOU_0647</name>
</gene>
<name>MNHE2_STAAT</name>